<accession>A3NYD2</accession>
<feature type="chain" id="PRO_0000347376" description="Urease accessory protein UreG">
    <location>
        <begin position="1"/>
        <end position="216"/>
    </location>
</feature>
<feature type="binding site" evidence="1">
    <location>
        <begin position="25"/>
        <end position="32"/>
    </location>
    <ligand>
        <name>GTP</name>
        <dbReference type="ChEBI" id="CHEBI:37565"/>
    </ligand>
</feature>
<sequence>MNAPRFAAPARRTKKLPPLRVGIGGPVGSGKTTLLEMLCKGMRERYDLVAITNDIYTKEDQRLLTIAGALPEARIMGVETGGCPHTAIREDASINLEAVERMLARFPDADIVFIESGGDNLAATFSPELSDLTIYVIDVAGGEKIPRKGGPGITKSDLLVINKTDLAPLVGANLEVMASDTRKMRGERPYVMCNLKALDGVADVIAFIENKGLLTV</sequence>
<protein>
    <recommendedName>
        <fullName evidence="1">Urease accessory protein UreG</fullName>
    </recommendedName>
</protein>
<proteinExistence type="inferred from homology"/>
<keyword id="KW-0143">Chaperone</keyword>
<keyword id="KW-0963">Cytoplasm</keyword>
<keyword id="KW-0342">GTP-binding</keyword>
<keyword id="KW-0996">Nickel insertion</keyword>
<keyword id="KW-0547">Nucleotide-binding</keyword>
<gene>
    <name evidence="1" type="primary">ureG</name>
    <name type="ordered locus">BURPS1106A_3115</name>
</gene>
<comment type="function">
    <text evidence="1">Facilitates the functional incorporation of the urease nickel metallocenter. This process requires GTP hydrolysis, probably effectuated by UreG.</text>
</comment>
<comment type="subunit">
    <text evidence="1">Homodimer. UreD, UreF and UreG form a complex that acts as a GTP-hydrolysis-dependent molecular chaperone, activating the urease apoprotein by helping to assemble the nickel containing metallocenter of UreC. The UreE protein probably delivers the nickel.</text>
</comment>
<comment type="subcellular location">
    <subcellularLocation>
        <location evidence="1">Cytoplasm</location>
    </subcellularLocation>
</comment>
<comment type="similarity">
    <text evidence="1">Belongs to the SIMIBI class G3E GTPase family. UreG subfamily.</text>
</comment>
<organism>
    <name type="scientific">Burkholderia pseudomallei (strain 1106a)</name>
    <dbReference type="NCBI Taxonomy" id="357348"/>
    <lineage>
        <taxon>Bacteria</taxon>
        <taxon>Pseudomonadati</taxon>
        <taxon>Pseudomonadota</taxon>
        <taxon>Betaproteobacteria</taxon>
        <taxon>Burkholderiales</taxon>
        <taxon>Burkholderiaceae</taxon>
        <taxon>Burkholderia</taxon>
        <taxon>pseudomallei group</taxon>
    </lineage>
</organism>
<reference key="1">
    <citation type="journal article" date="2010" name="Genome Biol. Evol.">
        <title>Continuing evolution of Burkholderia mallei through genome reduction and large-scale rearrangements.</title>
        <authorList>
            <person name="Losada L."/>
            <person name="Ronning C.M."/>
            <person name="DeShazer D."/>
            <person name="Woods D."/>
            <person name="Fedorova N."/>
            <person name="Kim H.S."/>
            <person name="Shabalina S.A."/>
            <person name="Pearson T.R."/>
            <person name="Brinkac L."/>
            <person name="Tan P."/>
            <person name="Nandi T."/>
            <person name="Crabtree J."/>
            <person name="Badger J."/>
            <person name="Beckstrom-Sternberg S."/>
            <person name="Saqib M."/>
            <person name="Schutzer S.E."/>
            <person name="Keim P."/>
            <person name="Nierman W.C."/>
        </authorList>
    </citation>
    <scope>NUCLEOTIDE SEQUENCE [LARGE SCALE GENOMIC DNA]</scope>
    <source>
        <strain>1106a</strain>
    </source>
</reference>
<dbReference type="EMBL" id="CP000572">
    <property type="protein sequence ID" value="ABN90293.1"/>
    <property type="molecule type" value="Genomic_DNA"/>
</dbReference>
<dbReference type="RefSeq" id="WP_004185810.1">
    <property type="nucleotide sequence ID" value="NC_009076.1"/>
</dbReference>
<dbReference type="SMR" id="A3NYD2"/>
<dbReference type="GeneID" id="92979890"/>
<dbReference type="KEGG" id="bpl:BURPS1106A_3115"/>
<dbReference type="HOGENOM" id="CLU_072144_1_0_4"/>
<dbReference type="Proteomes" id="UP000006738">
    <property type="component" value="Chromosome I"/>
</dbReference>
<dbReference type="GO" id="GO:0005737">
    <property type="term" value="C:cytoplasm"/>
    <property type="evidence" value="ECO:0007669"/>
    <property type="project" value="UniProtKB-SubCell"/>
</dbReference>
<dbReference type="GO" id="GO:0005525">
    <property type="term" value="F:GTP binding"/>
    <property type="evidence" value="ECO:0007669"/>
    <property type="project" value="UniProtKB-KW"/>
</dbReference>
<dbReference type="GO" id="GO:0003924">
    <property type="term" value="F:GTPase activity"/>
    <property type="evidence" value="ECO:0007669"/>
    <property type="project" value="InterPro"/>
</dbReference>
<dbReference type="GO" id="GO:0016151">
    <property type="term" value="F:nickel cation binding"/>
    <property type="evidence" value="ECO:0007669"/>
    <property type="project" value="UniProtKB-UniRule"/>
</dbReference>
<dbReference type="GO" id="GO:0043419">
    <property type="term" value="P:urea catabolic process"/>
    <property type="evidence" value="ECO:0007669"/>
    <property type="project" value="InterPro"/>
</dbReference>
<dbReference type="CDD" id="cd05540">
    <property type="entry name" value="UreG"/>
    <property type="match status" value="1"/>
</dbReference>
<dbReference type="FunFam" id="3.40.50.300:FF:000208">
    <property type="entry name" value="Urease accessory protein UreG"/>
    <property type="match status" value="1"/>
</dbReference>
<dbReference type="Gene3D" id="3.40.50.300">
    <property type="entry name" value="P-loop containing nucleotide triphosphate hydrolases"/>
    <property type="match status" value="1"/>
</dbReference>
<dbReference type="HAMAP" id="MF_01389">
    <property type="entry name" value="UreG"/>
    <property type="match status" value="1"/>
</dbReference>
<dbReference type="InterPro" id="IPR003495">
    <property type="entry name" value="CobW/HypB/UreG_nucleotide-bd"/>
</dbReference>
<dbReference type="InterPro" id="IPR027417">
    <property type="entry name" value="P-loop_NTPase"/>
</dbReference>
<dbReference type="InterPro" id="IPR004400">
    <property type="entry name" value="UreG"/>
</dbReference>
<dbReference type="NCBIfam" id="TIGR00101">
    <property type="entry name" value="ureG"/>
    <property type="match status" value="1"/>
</dbReference>
<dbReference type="PANTHER" id="PTHR31715">
    <property type="entry name" value="UREASE ACCESSORY PROTEIN G"/>
    <property type="match status" value="1"/>
</dbReference>
<dbReference type="PANTHER" id="PTHR31715:SF0">
    <property type="entry name" value="UREASE ACCESSORY PROTEIN G"/>
    <property type="match status" value="1"/>
</dbReference>
<dbReference type="Pfam" id="PF02492">
    <property type="entry name" value="cobW"/>
    <property type="match status" value="1"/>
</dbReference>
<dbReference type="PIRSF" id="PIRSF005624">
    <property type="entry name" value="Ni-bind_GTPase"/>
    <property type="match status" value="1"/>
</dbReference>
<dbReference type="SUPFAM" id="SSF52540">
    <property type="entry name" value="P-loop containing nucleoside triphosphate hydrolases"/>
    <property type="match status" value="1"/>
</dbReference>
<name>UREG_BURP0</name>
<evidence type="ECO:0000255" key="1">
    <source>
        <dbReference type="HAMAP-Rule" id="MF_01389"/>
    </source>
</evidence>